<name>GALK2_HUMAN</name>
<keyword id="KW-0002">3D-structure</keyword>
<keyword id="KW-0025">Alternative splicing</keyword>
<keyword id="KW-0067">ATP-binding</keyword>
<keyword id="KW-0418">Kinase</keyword>
<keyword id="KW-0547">Nucleotide-binding</keyword>
<keyword id="KW-1267">Proteomics identification</keyword>
<keyword id="KW-1185">Reference proteome</keyword>
<keyword id="KW-0808">Transferase</keyword>
<protein>
    <recommendedName>
        <fullName>N-acetylgalactosamine kinase</fullName>
        <ecNumber>2.7.1.157</ecNumber>
    </recommendedName>
    <alternativeName>
        <fullName>GalNAc kinase</fullName>
    </alternativeName>
    <alternativeName>
        <fullName>Galactokinase 2</fullName>
    </alternativeName>
</protein>
<proteinExistence type="evidence at protein level"/>
<reference key="1">
    <citation type="journal article" date="1992" name="Proc. Natl. Acad. Sci. U.S.A.">
        <title>Cloning of a human galactokinase gene (GK2) on chromosome 15 by complementation in yeast.</title>
        <authorList>
            <person name="Lee R.T."/>
            <person name="Peterson C.L."/>
            <person name="Calman A.F."/>
            <person name="Herskowitz I."/>
            <person name="O'Donnell J.J."/>
        </authorList>
    </citation>
    <scope>NUCLEOTIDE SEQUENCE [MRNA] (ISOFORM 1)</scope>
</reference>
<reference key="2">
    <citation type="submission" date="2001-12" db="EMBL/GenBank/DDBJ databases">
        <authorList>
            <person name="Guo J.H."/>
            <person name="Zan Q."/>
            <person name="Yu L."/>
        </authorList>
    </citation>
    <scope>NUCLEOTIDE SEQUENCE [LARGE SCALE MRNA] (ISOFORM 2)</scope>
</reference>
<reference key="3">
    <citation type="submission" date="2003-05" db="EMBL/GenBank/DDBJ databases">
        <title>Cloning of human full-length CDSs in BD Creator(TM) system donor vector.</title>
        <authorList>
            <person name="Kalnine N."/>
            <person name="Chen X."/>
            <person name="Rolfs A."/>
            <person name="Halleck A."/>
            <person name="Hines L."/>
            <person name="Eisenstein S."/>
            <person name="Koundinya M."/>
            <person name="Raphael J."/>
            <person name="Moreira D."/>
            <person name="Kelley T."/>
            <person name="LaBaer J."/>
            <person name="Lin Y."/>
            <person name="Phelan M."/>
            <person name="Farmer A."/>
        </authorList>
    </citation>
    <scope>NUCLEOTIDE SEQUENCE [LARGE SCALE MRNA] (ISOFORM 1)</scope>
</reference>
<reference key="4">
    <citation type="journal article" date="2006" name="Nature">
        <title>Analysis of the DNA sequence and duplication history of human chromosome 15.</title>
        <authorList>
            <person name="Zody M.C."/>
            <person name="Garber M."/>
            <person name="Sharpe T."/>
            <person name="Young S.K."/>
            <person name="Rowen L."/>
            <person name="O'Neill K."/>
            <person name="Whittaker C.A."/>
            <person name="Kamal M."/>
            <person name="Chang J.L."/>
            <person name="Cuomo C.A."/>
            <person name="Dewar K."/>
            <person name="FitzGerald M.G."/>
            <person name="Kodira C.D."/>
            <person name="Madan A."/>
            <person name="Qin S."/>
            <person name="Yang X."/>
            <person name="Abbasi N."/>
            <person name="Abouelleil A."/>
            <person name="Arachchi H.M."/>
            <person name="Baradarani L."/>
            <person name="Birditt B."/>
            <person name="Bloom S."/>
            <person name="Bloom T."/>
            <person name="Borowsky M.L."/>
            <person name="Burke J."/>
            <person name="Butler J."/>
            <person name="Cook A."/>
            <person name="DeArellano K."/>
            <person name="DeCaprio D."/>
            <person name="Dorris L. III"/>
            <person name="Dors M."/>
            <person name="Eichler E.E."/>
            <person name="Engels R."/>
            <person name="Fahey J."/>
            <person name="Fleetwood P."/>
            <person name="Friedman C."/>
            <person name="Gearin G."/>
            <person name="Hall J.L."/>
            <person name="Hensley G."/>
            <person name="Johnson E."/>
            <person name="Jones C."/>
            <person name="Kamat A."/>
            <person name="Kaur A."/>
            <person name="Locke D.P."/>
            <person name="Madan A."/>
            <person name="Munson G."/>
            <person name="Jaffe D.B."/>
            <person name="Lui A."/>
            <person name="Macdonald P."/>
            <person name="Mauceli E."/>
            <person name="Naylor J.W."/>
            <person name="Nesbitt R."/>
            <person name="Nicol R."/>
            <person name="O'Leary S.B."/>
            <person name="Ratcliffe A."/>
            <person name="Rounsley S."/>
            <person name="She X."/>
            <person name="Sneddon K.M.B."/>
            <person name="Stewart S."/>
            <person name="Sougnez C."/>
            <person name="Stone S.M."/>
            <person name="Topham K."/>
            <person name="Vincent D."/>
            <person name="Wang S."/>
            <person name="Zimmer A.R."/>
            <person name="Birren B.W."/>
            <person name="Hood L."/>
            <person name="Lander E.S."/>
            <person name="Nusbaum C."/>
        </authorList>
    </citation>
    <scope>NUCLEOTIDE SEQUENCE [LARGE SCALE GENOMIC DNA]</scope>
</reference>
<reference key="5">
    <citation type="journal article" date="2004" name="Genome Res.">
        <title>The status, quality, and expansion of the NIH full-length cDNA project: the Mammalian Gene Collection (MGC).</title>
        <authorList>
            <consortium name="The MGC Project Team"/>
        </authorList>
    </citation>
    <scope>NUCLEOTIDE SEQUENCE [LARGE SCALE MRNA] (ISOFORM 1)</scope>
    <source>
        <tissue>Placenta</tissue>
    </source>
</reference>
<reference key="6">
    <citation type="journal article" date="1995" name="Biochem. Biophys. Res. Commun.">
        <title>Comparison of the enzymatic activities of human galactokinase GALK1 and a related human galactokinase protein GK2.</title>
        <authorList>
            <person name="Ai Y."/>
            <person name="Basu M."/>
            <person name="Bergsma D.J."/>
            <person name="Stambolian D."/>
        </authorList>
    </citation>
    <scope>CHARACTERIZATION</scope>
</reference>
<reference key="7">
    <citation type="journal article" date="1996" name="J. Biol. Chem.">
        <title>Identification of the GalNAc kinase amino acid sequence.</title>
        <authorList>
            <person name="Pastuszak I."/>
            <person name="O'Donnell J."/>
            <person name="Elbein A.D."/>
        </authorList>
    </citation>
    <scope>POSSIBLE FUNCTION</scope>
</reference>
<reference key="8">
    <citation type="journal article" date="2011" name="BMC Syst. Biol.">
        <title>Initial characterization of the human central proteome.</title>
        <authorList>
            <person name="Burkard T.R."/>
            <person name="Planyavsky M."/>
            <person name="Kaupe I."/>
            <person name="Breitwieser F.P."/>
            <person name="Buerckstuemmer T."/>
            <person name="Bennett K.L."/>
            <person name="Superti-Furga G."/>
            <person name="Colinge J."/>
        </authorList>
    </citation>
    <scope>IDENTIFICATION BY MASS SPECTROMETRY [LARGE SCALE ANALYSIS]</scope>
</reference>
<reference key="9">
    <citation type="journal article" date="2005" name="J. Biol. Chem.">
        <title>The molecular architecture of human N-acetylgalactosamine kinase.</title>
        <authorList>
            <person name="Thoden J.B."/>
            <person name="Holden H.M."/>
        </authorList>
    </citation>
    <scope>X-RAY CRYSTALLOGRAPHY (1.65 ANGSTROMS) IN COMPLEX WITH GALNAC AND ATP</scope>
    <scope>SUBUNIT</scope>
    <scope>FUNCTION</scope>
    <scope>SUBSTRATE-BINDING SITES</scope>
</reference>
<evidence type="ECO:0000250" key="1">
    <source>
        <dbReference type="UniProtKB" id="P04385"/>
    </source>
</evidence>
<evidence type="ECO:0000250" key="2">
    <source>
        <dbReference type="UniProtKB" id="Q9HHB6"/>
    </source>
</evidence>
<evidence type="ECO:0000269" key="3">
    <source>
    </source>
</evidence>
<evidence type="ECO:0000303" key="4">
    <source ref="2"/>
</evidence>
<evidence type="ECO:0000305" key="5"/>
<evidence type="ECO:0007829" key="6">
    <source>
        <dbReference type="PDB" id="2A2C"/>
    </source>
</evidence>
<evidence type="ECO:0007829" key="7">
    <source>
        <dbReference type="PDB" id="2A2D"/>
    </source>
</evidence>
<feature type="chain" id="PRO_0000184647" description="N-acetylgalactosamine kinase">
    <location>
        <begin position="1"/>
        <end position="458"/>
    </location>
</feature>
<feature type="active site" description="Proton acceptor" evidence="2">
    <location>
        <position position="190"/>
    </location>
</feature>
<feature type="binding site" evidence="1">
    <location>
        <position position="43"/>
    </location>
    <ligand>
        <name>alpha-D-galactose</name>
        <dbReference type="ChEBI" id="CHEBI:28061"/>
    </ligand>
</feature>
<feature type="binding site" evidence="1">
    <location>
        <position position="49"/>
    </location>
    <ligand>
        <name>alpha-D-galactose</name>
        <dbReference type="ChEBI" id="CHEBI:28061"/>
    </ligand>
</feature>
<feature type="binding site" evidence="1">
    <location>
        <position position="50"/>
    </location>
    <ligand>
        <name>alpha-D-galactose</name>
        <dbReference type="ChEBI" id="CHEBI:28061"/>
    </ligand>
</feature>
<feature type="binding site" evidence="1">
    <location>
        <position position="52"/>
    </location>
    <ligand>
        <name>alpha-D-galactose</name>
        <dbReference type="ChEBI" id="CHEBI:28061"/>
    </ligand>
</feature>
<feature type="binding site" evidence="1">
    <location>
        <position position="143"/>
    </location>
    <ligand>
        <name>ATP</name>
        <dbReference type="ChEBI" id="CHEBI:30616"/>
    </ligand>
</feature>
<feature type="binding site" evidence="1">
    <location>
        <position position="145"/>
    </location>
    <ligand>
        <name>ATP</name>
        <dbReference type="ChEBI" id="CHEBI:30616"/>
    </ligand>
</feature>
<feature type="binding site" evidence="1">
    <location>
        <position position="146"/>
    </location>
    <ligand>
        <name>ATP</name>
        <dbReference type="ChEBI" id="CHEBI:30616"/>
    </ligand>
</feature>
<feature type="binding site" evidence="1">
    <location>
        <position position="190"/>
    </location>
    <ligand>
        <name>alpha-D-galactose</name>
        <dbReference type="ChEBI" id="CHEBI:28061"/>
    </ligand>
</feature>
<feature type="binding site" evidence="1">
    <location>
        <position position="233"/>
    </location>
    <ligand>
        <name>ATP</name>
        <dbReference type="ChEBI" id="CHEBI:30616"/>
    </ligand>
</feature>
<feature type="binding site" evidence="1">
    <location>
        <position position="234"/>
    </location>
    <ligand>
        <name>ATP</name>
        <dbReference type="ChEBI" id="CHEBI:30616"/>
    </ligand>
</feature>
<feature type="site" description="Transition state stabilizer" evidence="2">
    <location>
        <position position="43"/>
    </location>
</feature>
<feature type="splice variant" id="VSP_042897" description="In isoform 2." evidence="4">
    <original>MATESPATRRVQVAEHP</original>
    <variation>MPVLYD</variation>
    <location>
        <begin position="1"/>
        <end position="17"/>
    </location>
</feature>
<feature type="sequence variant" id="VAR_049123" description="In dbSNP:rs35507772.">
    <original>I</original>
    <variation>V</variation>
    <location>
        <position position="182"/>
    </location>
</feature>
<feature type="strand" evidence="6">
    <location>
        <begin position="8"/>
        <end position="11"/>
    </location>
</feature>
<feature type="helix" evidence="6">
    <location>
        <begin position="13"/>
        <end position="15"/>
    </location>
</feature>
<feature type="helix" evidence="6">
    <location>
        <begin position="17"/>
        <end position="30"/>
    </location>
</feature>
<feature type="strand" evidence="6">
    <location>
        <begin position="35"/>
        <end position="47"/>
    </location>
</feature>
<feature type="helix" evidence="6">
    <location>
        <begin position="52"/>
        <end position="54"/>
    </location>
</feature>
<feature type="strand" evidence="6">
    <location>
        <begin position="58"/>
        <end position="73"/>
    </location>
</feature>
<feature type="strand" evidence="6">
    <location>
        <begin position="75"/>
        <end position="77"/>
    </location>
</feature>
<feature type="strand" evidence="6">
    <location>
        <begin position="79"/>
        <end position="85"/>
    </location>
</feature>
<feature type="strand" evidence="6">
    <location>
        <begin position="91"/>
        <end position="93"/>
    </location>
</feature>
<feature type="strand" evidence="7">
    <location>
        <begin position="102"/>
        <end position="104"/>
    </location>
</feature>
<feature type="helix" evidence="6">
    <location>
        <begin position="107"/>
        <end position="121"/>
    </location>
</feature>
<feature type="strand" evidence="6">
    <location>
        <begin position="130"/>
        <end position="136"/>
    </location>
</feature>
<feature type="strand" evidence="6">
    <location>
        <begin position="142"/>
        <end position="144"/>
    </location>
</feature>
<feature type="helix" evidence="6">
    <location>
        <begin position="146"/>
        <end position="162"/>
    </location>
</feature>
<feature type="helix" evidence="6">
    <location>
        <begin position="168"/>
        <end position="179"/>
    </location>
</feature>
<feature type="helix" evidence="6">
    <location>
        <begin position="180"/>
        <end position="182"/>
    </location>
</feature>
<feature type="helix" evidence="6">
    <location>
        <begin position="189"/>
        <end position="196"/>
    </location>
</feature>
<feature type="strand" evidence="6">
    <location>
        <begin position="201"/>
        <end position="206"/>
    </location>
</feature>
<feature type="turn" evidence="6">
    <location>
        <begin position="207"/>
        <end position="210"/>
    </location>
</feature>
<feature type="strand" evidence="6">
    <location>
        <begin position="211"/>
        <end position="215"/>
    </location>
</feature>
<feature type="strand" evidence="6">
    <location>
        <begin position="221"/>
        <end position="227"/>
    </location>
</feature>
<feature type="helix" evidence="6">
    <location>
        <begin position="234"/>
        <end position="236"/>
    </location>
</feature>
<feature type="helix" evidence="6">
    <location>
        <begin position="239"/>
        <end position="257"/>
    </location>
</feature>
<feature type="turn" evidence="6">
    <location>
        <begin position="262"/>
        <end position="264"/>
    </location>
</feature>
<feature type="helix" evidence="6">
    <location>
        <begin position="268"/>
        <end position="275"/>
    </location>
</feature>
<feature type="helix" evidence="6">
    <location>
        <begin position="279"/>
        <end position="289"/>
    </location>
</feature>
<feature type="helix" evidence="6">
    <location>
        <begin position="297"/>
        <end position="304"/>
    </location>
</feature>
<feature type="helix" evidence="6">
    <location>
        <begin position="308"/>
        <end position="314"/>
    </location>
</feature>
<feature type="helix" evidence="6">
    <location>
        <begin position="318"/>
        <end position="320"/>
    </location>
</feature>
<feature type="helix" evidence="6">
    <location>
        <begin position="328"/>
        <end position="351"/>
    </location>
</feature>
<feature type="helix" evidence="6">
    <location>
        <begin position="356"/>
        <end position="373"/>
    </location>
</feature>
<feature type="helix" evidence="6">
    <location>
        <begin position="380"/>
        <end position="391"/>
    </location>
</feature>
<feature type="strand" evidence="6">
    <location>
        <begin position="395"/>
        <end position="399"/>
    </location>
</feature>
<feature type="strand" evidence="6">
    <location>
        <begin position="404"/>
        <end position="413"/>
    </location>
</feature>
<feature type="helix" evidence="6">
    <location>
        <begin position="414"/>
        <end position="416"/>
    </location>
</feature>
<feature type="helix" evidence="6">
    <location>
        <begin position="417"/>
        <end position="429"/>
    </location>
</feature>
<feature type="strand" evidence="6">
    <location>
        <begin position="442"/>
        <end position="446"/>
    </location>
</feature>
<feature type="strand" evidence="6">
    <location>
        <begin position="453"/>
        <end position="457"/>
    </location>
</feature>
<organism>
    <name type="scientific">Homo sapiens</name>
    <name type="common">Human</name>
    <dbReference type="NCBI Taxonomy" id="9606"/>
    <lineage>
        <taxon>Eukaryota</taxon>
        <taxon>Metazoa</taxon>
        <taxon>Chordata</taxon>
        <taxon>Craniata</taxon>
        <taxon>Vertebrata</taxon>
        <taxon>Euteleostomi</taxon>
        <taxon>Mammalia</taxon>
        <taxon>Eutheria</taxon>
        <taxon>Euarchontoglires</taxon>
        <taxon>Primates</taxon>
        <taxon>Haplorrhini</taxon>
        <taxon>Catarrhini</taxon>
        <taxon>Hominidae</taxon>
        <taxon>Homo</taxon>
    </lineage>
</organism>
<dbReference type="EC" id="2.7.1.157"/>
<dbReference type="EMBL" id="M84443">
    <property type="protein sequence ID" value="AAA58612.1"/>
    <property type="molecule type" value="mRNA"/>
</dbReference>
<dbReference type="EMBL" id="AF461816">
    <property type="protein sequence ID" value="AAP97708.1"/>
    <property type="molecule type" value="mRNA"/>
</dbReference>
<dbReference type="EMBL" id="BT006901">
    <property type="protein sequence ID" value="AAP35547.1"/>
    <property type="molecule type" value="mRNA"/>
</dbReference>
<dbReference type="EMBL" id="AC013452">
    <property type="status" value="NOT_ANNOTATED_CDS"/>
    <property type="molecule type" value="Genomic_DNA"/>
</dbReference>
<dbReference type="EMBL" id="AC022306">
    <property type="status" value="NOT_ANNOTATED_CDS"/>
    <property type="molecule type" value="Genomic_DNA"/>
</dbReference>
<dbReference type="EMBL" id="AC036102">
    <property type="status" value="NOT_ANNOTATED_CDS"/>
    <property type="molecule type" value="Genomic_DNA"/>
</dbReference>
<dbReference type="EMBL" id="BC005141">
    <property type="protein sequence ID" value="AAH05141.1"/>
    <property type="molecule type" value="mRNA"/>
</dbReference>
<dbReference type="CCDS" id="CCDS32236.1">
    <molecule id="Q01415-2"/>
</dbReference>
<dbReference type="CCDS" id="CCDS42034.1">
    <molecule id="Q01415-1"/>
</dbReference>
<dbReference type="PIR" id="A46366">
    <property type="entry name" value="A46366"/>
</dbReference>
<dbReference type="RefSeq" id="NP_001001556.1">
    <molecule id="Q01415-2"/>
    <property type="nucleotide sequence ID" value="NM_001001556.3"/>
</dbReference>
<dbReference type="RefSeq" id="NP_002035.1">
    <molecule id="Q01415-1"/>
    <property type="nucleotide sequence ID" value="NM_002044.4"/>
</dbReference>
<dbReference type="PDB" id="2A2C">
    <property type="method" value="X-ray"/>
    <property type="resolution" value="1.65 A"/>
    <property type="chains" value="A=1-458"/>
</dbReference>
<dbReference type="PDB" id="2A2D">
    <property type="method" value="X-ray"/>
    <property type="resolution" value="2.20 A"/>
    <property type="chains" value="A=1-458"/>
</dbReference>
<dbReference type="PDBsum" id="2A2C"/>
<dbReference type="PDBsum" id="2A2D"/>
<dbReference type="SMR" id="Q01415"/>
<dbReference type="BioGRID" id="108858">
    <property type="interactions" value="22"/>
</dbReference>
<dbReference type="FunCoup" id="Q01415">
    <property type="interactions" value="1989"/>
</dbReference>
<dbReference type="IntAct" id="Q01415">
    <property type="interactions" value="8"/>
</dbReference>
<dbReference type="STRING" id="9606.ENSP00000453129"/>
<dbReference type="GlyGen" id="Q01415">
    <property type="glycosylation" value="1 site, 1 O-linked glycan (1 site)"/>
</dbReference>
<dbReference type="iPTMnet" id="Q01415"/>
<dbReference type="PhosphoSitePlus" id="Q01415"/>
<dbReference type="SwissPalm" id="Q01415"/>
<dbReference type="BioMuta" id="GALK2"/>
<dbReference type="DMDM" id="399518"/>
<dbReference type="jPOST" id="Q01415"/>
<dbReference type="MassIVE" id="Q01415"/>
<dbReference type="PaxDb" id="9606-ENSP00000453129"/>
<dbReference type="PeptideAtlas" id="Q01415"/>
<dbReference type="ProteomicsDB" id="57943">
    <molecule id="Q01415-1"/>
</dbReference>
<dbReference type="ProteomicsDB" id="57944">
    <molecule id="Q01415-2"/>
</dbReference>
<dbReference type="Pumba" id="Q01415"/>
<dbReference type="Antibodypedia" id="24645">
    <property type="antibodies" value="262 antibodies from 26 providers"/>
</dbReference>
<dbReference type="DNASU" id="2585"/>
<dbReference type="Ensembl" id="ENST00000327171.7">
    <molecule id="Q01415-2"/>
    <property type="protein sequence ID" value="ENSP00000316632.3"/>
    <property type="gene ID" value="ENSG00000156958.15"/>
</dbReference>
<dbReference type="Ensembl" id="ENST00000560031.6">
    <molecule id="Q01415-1"/>
    <property type="protein sequence ID" value="ENSP00000453129.1"/>
    <property type="gene ID" value="ENSG00000156958.15"/>
</dbReference>
<dbReference type="GeneID" id="2585"/>
<dbReference type="KEGG" id="hsa:2585"/>
<dbReference type="MANE-Select" id="ENST00000560031.6">
    <property type="protein sequence ID" value="ENSP00000453129.1"/>
    <property type="RefSeq nucleotide sequence ID" value="NM_002044.4"/>
    <property type="RefSeq protein sequence ID" value="NP_002035.1"/>
</dbReference>
<dbReference type="UCSC" id="uc001zxi.3">
    <molecule id="Q01415-1"/>
    <property type="organism name" value="human"/>
</dbReference>
<dbReference type="AGR" id="HGNC:4119"/>
<dbReference type="CTD" id="2585"/>
<dbReference type="DisGeNET" id="2585"/>
<dbReference type="GeneCards" id="GALK2"/>
<dbReference type="HGNC" id="HGNC:4119">
    <property type="gene designation" value="GALK2"/>
</dbReference>
<dbReference type="HPA" id="ENSG00000156958">
    <property type="expression patterns" value="Low tissue specificity"/>
</dbReference>
<dbReference type="MIM" id="137028">
    <property type="type" value="gene"/>
</dbReference>
<dbReference type="neXtProt" id="NX_Q01415"/>
<dbReference type="OpenTargets" id="ENSG00000156958"/>
<dbReference type="PharmGKB" id="PA28534"/>
<dbReference type="VEuPathDB" id="HostDB:ENSG00000156958"/>
<dbReference type="eggNOG" id="KOG0631">
    <property type="taxonomic scope" value="Eukaryota"/>
</dbReference>
<dbReference type="GeneTree" id="ENSGT00950000183187"/>
<dbReference type="InParanoid" id="Q01415"/>
<dbReference type="OMA" id="GFHDTYF"/>
<dbReference type="OrthoDB" id="187738at2759"/>
<dbReference type="PAN-GO" id="Q01415">
    <property type="GO annotations" value="3 GO annotations based on evolutionary models"/>
</dbReference>
<dbReference type="PhylomeDB" id="Q01415"/>
<dbReference type="TreeFam" id="TF324235"/>
<dbReference type="BRENDA" id="2.7.1.157">
    <property type="organism ID" value="2681"/>
</dbReference>
<dbReference type="PathwayCommons" id="Q01415"/>
<dbReference type="SignaLink" id="Q01415"/>
<dbReference type="BioGRID-ORCS" id="2585">
    <property type="hits" value="18 hits in 1163 CRISPR screens"/>
</dbReference>
<dbReference type="ChiTaRS" id="GALK2">
    <property type="organism name" value="human"/>
</dbReference>
<dbReference type="EvolutionaryTrace" id="Q01415"/>
<dbReference type="GenomeRNAi" id="2585"/>
<dbReference type="Pharos" id="Q01415">
    <property type="development level" value="Tbio"/>
</dbReference>
<dbReference type="PRO" id="PR:Q01415"/>
<dbReference type="Proteomes" id="UP000005640">
    <property type="component" value="Chromosome 15"/>
</dbReference>
<dbReference type="RNAct" id="Q01415">
    <property type="molecule type" value="protein"/>
</dbReference>
<dbReference type="Bgee" id="ENSG00000156958">
    <property type="expression patterns" value="Expressed in calcaneal tendon and 192 other cell types or tissues"/>
</dbReference>
<dbReference type="ExpressionAtlas" id="Q01415">
    <property type="expression patterns" value="baseline and differential"/>
</dbReference>
<dbReference type="GO" id="GO:0005829">
    <property type="term" value="C:cytosol"/>
    <property type="evidence" value="ECO:0000318"/>
    <property type="project" value="GO_Central"/>
</dbReference>
<dbReference type="GO" id="GO:0005524">
    <property type="term" value="F:ATP binding"/>
    <property type="evidence" value="ECO:0007669"/>
    <property type="project" value="UniProtKB-KW"/>
</dbReference>
<dbReference type="GO" id="GO:0004335">
    <property type="term" value="F:galactokinase activity"/>
    <property type="evidence" value="ECO:0000314"/>
    <property type="project" value="UniProtKB"/>
</dbReference>
<dbReference type="GO" id="GO:0033858">
    <property type="term" value="F:N-acetylgalactosamine kinase activity"/>
    <property type="evidence" value="ECO:0007669"/>
    <property type="project" value="UniProtKB-EC"/>
</dbReference>
<dbReference type="GO" id="GO:0005975">
    <property type="term" value="P:carbohydrate metabolic process"/>
    <property type="evidence" value="ECO:0000304"/>
    <property type="project" value="ProtInc"/>
</dbReference>
<dbReference type="GO" id="GO:0006012">
    <property type="term" value="P:galactose metabolic process"/>
    <property type="evidence" value="ECO:0000318"/>
    <property type="project" value="GO_Central"/>
</dbReference>
<dbReference type="FunFam" id="3.30.70.3170:FF:000001">
    <property type="entry name" value="galactokinase isoform X1"/>
    <property type="match status" value="1"/>
</dbReference>
<dbReference type="FunFam" id="1.20.1440.340:FF:000001">
    <property type="entry name" value="N-acetylgalactosamine kinase isoform 2"/>
    <property type="match status" value="1"/>
</dbReference>
<dbReference type="FunFam" id="3.30.230.10:FF:000023">
    <property type="entry name" value="Putative N-acetylgalactosamine kinase"/>
    <property type="match status" value="1"/>
</dbReference>
<dbReference type="Gene3D" id="1.20.1440.340">
    <property type="match status" value="1"/>
</dbReference>
<dbReference type="Gene3D" id="3.30.230.10">
    <property type="match status" value="1"/>
</dbReference>
<dbReference type="Gene3D" id="3.30.70.3170">
    <property type="match status" value="1"/>
</dbReference>
<dbReference type="InterPro" id="IPR000705">
    <property type="entry name" value="Galactokinase"/>
</dbReference>
<dbReference type="InterPro" id="IPR019741">
    <property type="entry name" value="Galactokinase_CS"/>
</dbReference>
<dbReference type="InterPro" id="IPR019539">
    <property type="entry name" value="GalKase_N"/>
</dbReference>
<dbReference type="InterPro" id="IPR013750">
    <property type="entry name" value="GHMP_kinase_C_dom"/>
</dbReference>
<dbReference type="InterPro" id="IPR036554">
    <property type="entry name" value="GHMP_kinase_C_sf"/>
</dbReference>
<dbReference type="InterPro" id="IPR006204">
    <property type="entry name" value="GHMP_kinase_N_dom"/>
</dbReference>
<dbReference type="InterPro" id="IPR006203">
    <property type="entry name" value="GHMP_knse_ATP-bd_CS"/>
</dbReference>
<dbReference type="InterPro" id="IPR006206">
    <property type="entry name" value="Mevalonate/galactokinase"/>
</dbReference>
<dbReference type="InterPro" id="IPR020568">
    <property type="entry name" value="Ribosomal_Su5_D2-typ_SF"/>
</dbReference>
<dbReference type="InterPro" id="IPR014721">
    <property type="entry name" value="Ribsml_uS5_D2-typ_fold_subgr"/>
</dbReference>
<dbReference type="NCBIfam" id="TIGR00131">
    <property type="entry name" value="gal_kin"/>
    <property type="match status" value="1"/>
</dbReference>
<dbReference type="PANTHER" id="PTHR10457:SF7">
    <property type="entry name" value="GALACTOKINASE-RELATED"/>
    <property type="match status" value="1"/>
</dbReference>
<dbReference type="PANTHER" id="PTHR10457">
    <property type="entry name" value="MEVALONATE KINASE/GALACTOKINASE"/>
    <property type="match status" value="1"/>
</dbReference>
<dbReference type="Pfam" id="PF10509">
    <property type="entry name" value="GalKase_gal_bdg"/>
    <property type="match status" value="1"/>
</dbReference>
<dbReference type="Pfam" id="PF08544">
    <property type="entry name" value="GHMP_kinases_C"/>
    <property type="match status" value="1"/>
</dbReference>
<dbReference type="Pfam" id="PF00288">
    <property type="entry name" value="GHMP_kinases_N"/>
    <property type="match status" value="1"/>
</dbReference>
<dbReference type="PIRSF" id="PIRSF000530">
    <property type="entry name" value="Galactokinase"/>
    <property type="match status" value="1"/>
</dbReference>
<dbReference type="PRINTS" id="PR00473">
    <property type="entry name" value="GALCTOKINASE"/>
</dbReference>
<dbReference type="PRINTS" id="PR00959">
    <property type="entry name" value="MEVGALKINASE"/>
</dbReference>
<dbReference type="SUPFAM" id="SSF55060">
    <property type="entry name" value="GHMP Kinase, C-terminal domain"/>
    <property type="match status" value="1"/>
</dbReference>
<dbReference type="SUPFAM" id="SSF54211">
    <property type="entry name" value="Ribosomal protein S5 domain 2-like"/>
    <property type="match status" value="1"/>
</dbReference>
<dbReference type="PROSITE" id="PS00106">
    <property type="entry name" value="GALACTOKINASE"/>
    <property type="match status" value="1"/>
</dbReference>
<dbReference type="PROSITE" id="PS00627">
    <property type="entry name" value="GHMP_KINASES_ATP"/>
    <property type="match status" value="1"/>
</dbReference>
<comment type="function">
    <text evidence="3">Acts on GalNAc. Also acts as a galactokinase when galactose is present at high concentrations. May be involved in a salvage pathway for the reutilization of free GalNAc derived from the degradation of complex carbohydrates.</text>
</comment>
<comment type="catalytic activity">
    <reaction>
        <text>N-acetyl-alpha-D-galactosamine + ATP = N-acetyl-alpha-D-galactosamine 1-phosphate + ADP + H(+)</text>
        <dbReference type="Rhea" id="RHEA:12617"/>
        <dbReference type="ChEBI" id="CHEBI:15378"/>
        <dbReference type="ChEBI" id="CHEBI:30616"/>
        <dbReference type="ChEBI" id="CHEBI:40356"/>
        <dbReference type="ChEBI" id="CHEBI:61970"/>
        <dbReference type="ChEBI" id="CHEBI:456216"/>
        <dbReference type="EC" id="2.7.1.157"/>
    </reaction>
</comment>
<comment type="subunit">
    <text evidence="3">Monomer.</text>
</comment>
<comment type="alternative products">
    <event type="alternative splicing"/>
    <isoform>
        <id>Q01415-1</id>
        <name>1</name>
        <sequence type="displayed"/>
    </isoform>
    <isoform>
        <id>Q01415-2</id>
        <name>2</name>
        <sequence type="described" ref="VSP_042897"/>
    </isoform>
</comment>
<comment type="similarity">
    <text evidence="5">Belongs to the GHMP kinase family. GalK subfamily.</text>
</comment>
<gene>
    <name type="primary">GALK2</name>
    <name type="synonym">GK2</name>
</gene>
<sequence length="458" mass="50378">MATESPATRRVQVAEHPRLLKLKEMFNSKFGSIPKFYVRAPGRVNIIGEHIDYCGYSVLPMAVEQDVLIAVEPVKTYALQLANTNPLYPDFSTSANNIQIDKTKPLWHNYFLCGLKGIQEHFGLSNLTGMNCLVDGNIPPSSGLSSSSALVCCAGLVTLTVLGRNLSKVELAEICAKSERYIGTEGGGMDQSISFLAEEGTAKLIEFSPLRATDVKLPSGAVFVIANSCVEMNKAATSHFNIRVMECRLAAKLLAKYKSLQWDKVLRLEEVQAKLGISLEEMLLVTEDALHPEPYNPEEICRCLGISLEELRTQILSPNTQDVLIFKLYQRAKHVYSEAARVLQFKKICEEAPENMVQLLGELMNQSHMSCRDMYECSCPELDQLVDICRKFGAQGSRLTGAGWGGCTVSMVPADKLPSFLANVHKAYYQRSDGSLAPEKQSLFATKPGGGALVLLEA</sequence>
<accession>Q01415</accession>
<accession>Q7Z4Q4</accession>